<feature type="chain" id="PRO_0000153021" description="Probable GTP 3',8-cyclase">
    <location>
        <begin position="1"/>
        <end position="305"/>
    </location>
</feature>
<feature type="domain" description="Radical SAM core" evidence="2">
    <location>
        <begin position="6"/>
        <end position="228"/>
    </location>
</feature>
<feature type="binding site" evidence="1">
    <location>
        <position position="15"/>
    </location>
    <ligand>
        <name>GTP</name>
        <dbReference type="ChEBI" id="CHEBI:37565"/>
    </ligand>
</feature>
<feature type="binding site" evidence="1">
    <location>
        <position position="22"/>
    </location>
    <ligand>
        <name>[4Fe-4S] cluster</name>
        <dbReference type="ChEBI" id="CHEBI:49883"/>
        <label>1</label>
        <note>4Fe-4S-S-AdoMet</note>
    </ligand>
</feature>
<feature type="binding site" evidence="1">
    <location>
        <position position="26"/>
    </location>
    <ligand>
        <name>[4Fe-4S] cluster</name>
        <dbReference type="ChEBI" id="CHEBI:49883"/>
        <label>1</label>
        <note>4Fe-4S-S-AdoMet</note>
    </ligand>
</feature>
<feature type="binding site" evidence="1">
    <location>
        <position position="28"/>
    </location>
    <ligand>
        <name>S-adenosyl-L-methionine</name>
        <dbReference type="ChEBI" id="CHEBI:59789"/>
    </ligand>
</feature>
<feature type="binding site" evidence="1">
    <location>
        <position position="29"/>
    </location>
    <ligand>
        <name>[4Fe-4S] cluster</name>
        <dbReference type="ChEBI" id="CHEBI:49883"/>
        <label>1</label>
        <note>4Fe-4S-S-AdoMet</note>
    </ligand>
</feature>
<feature type="binding site" evidence="1">
    <location>
        <position position="62"/>
    </location>
    <ligand>
        <name>GTP</name>
        <dbReference type="ChEBI" id="CHEBI:37565"/>
    </ligand>
</feature>
<feature type="binding site" evidence="1">
    <location>
        <position position="66"/>
    </location>
    <ligand>
        <name>S-adenosyl-L-methionine</name>
        <dbReference type="ChEBI" id="CHEBI:59789"/>
    </ligand>
</feature>
<feature type="binding site" evidence="1">
    <location>
        <position position="92"/>
    </location>
    <ligand>
        <name>GTP</name>
        <dbReference type="ChEBI" id="CHEBI:37565"/>
    </ligand>
</feature>
<feature type="binding site" evidence="1">
    <location>
        <position position="116"/>
    </location>
    <ligand>
        <name>S-adenosyl-L-methionine</name>
        <dbReference type="ChEBI" id="CHEBI:59789"/>
    </ligand>
</feature>
<feature type="binding site" evidence="1">
    <location>
        <position position="153"/>
    </location>
    <ligand>
        <name>GTP</name>
        <dbReference type="ChEBI" id="CHEBI:37565"/>
    </ligand>
</feature>
<feature type="binding site" evidence="1">
    <location>
        <position position="249"/>
    </location>
    <ligand>
        <name>[4Fe-4S] cluster</name>
        <dbReference type="ChEBI" id="CHEBI:49883"/>
        <label>2</label>
        <note>4Fe-4S-substrate</note>
    </ligand>
</feature>
<feature type="binding site" evidence="1">
    <location>
        <position position="252"/>
    </location>
    <ligand>
        <name>[4Fe-4S] cluster</name>
        <dbReference type="ChEBI" id="CHEBI:49883"/>
        <label>2</label>
        <note>4Fe-4S-substrate</note>
    </ligand>
</feature>
<feature type="binding site" evidence="1">
    <location>
        <begin position="254"/>
        <end position="256"/>
    </location>
    <ligand>
        <name>GTP</name>
        <dbReference type="ChEBI" id="CHEBI:37565"/>
    </ligand>
</feature>
<feature type="binding site" evidence="1">
    <location>
        <position position="266"/>
    </location>
    <ligand>
        <name>[4Fe-4S] cluster</name>
        <dbReference type="ChEBI" id="CHEBI:49883"/>
        <label>2</label>
        <note>4Fe-4S-substrate</note>
    </ligand>
</feature>
<evidence type="ECO:0000255" key="1">
    <source>
        <dbReference type="HAMAP-Rule" id="MF_01225"/>
    </source>
</evidence>
<evidence type="ECO:0000255" key="2">
    <source>
        <dbReference type="PROSITE-ProRule" id="PRU01266"/>
    </source>
</evidence>
<reference key="1">
    <citation type="journal article" date="2010" name="J. Bacteriol.">
        <title>Complete genome sequence of Methanothermobacter marburgensis, a methanoarchaeon model organism.</title>
        <authorList>
            <person name="Liesegang H."/>
            <person name="Kaster A.K."/>
            <person name="Wiezer A."/>
            <person name="Goenrich M."/>
            <person name="Wollherr A."/>
            <person name="Seedorf H."/>
            <person name="Gottschalk G."/>
            <person name="Thauer R.K."/>
        </authorList>
    </citation>
    <scope>NUCLEOTIDE SEQUENCE [LARGE SCALE GENOMIC DNA]</scope>
    <source>
        <strain>ATCC BAA-927 / DSM 2133 / JCM 14651 / NBRC 100331 / OCM 82 / Marburg</strain>
    </source>
</reference>
<reference key="2">
    <citation type="journal article" date="1995" name="Eur. J. Biochem.">
        <title>The tungsten formylmethanofuran dehydrogenase from Methanobacterium thermoautotrophicum contains sequence motifs characteristic for enzymes containing molybdopterin dinucleotide.</title>
        <authorList>
            <person name="Hochheimer A."/>
            <person name="Schmitz R.A."/>
            <person name="Thauer R.K."/>
            <person name="Hedderich R."/>
        </authorList>
    </citation>
    <scope>NUCLEOTIDE SEQUENCE [GENOMIC DNA] OF 1-87</scope>
    <source>
        <strain>ATCC BAA-927 / DSM 2133 / JCM 14651 / NBRC 100331 / OCM 82 / Marburg</strain>
    </source>
</reference>
<keyword id="KW-0004">4Fe-4S</keyword>
<keyword id="KW-0342">GTP-binding</keyword>
<keyword id="KW-0408">Iron</keyword>
<keyword id="KW-0411">Iron-sulfur</keyword>
<keyword id="KW-0456">Lyase</keyword>
<keyword id="KW-0479">Metal-binding</keyword>
<keyword id="KW-0501">Molybdenum cofactor biosynthesis</keyword>
<keyword id="KW-0547">Nucleotide-binding</keyword>
<keyword id="KW-0949">S-adenosyl-L-methionine</keyword>
<accession>Q50746</accession>
<accession>D9PU47</accession>
<organism>
    <name type="scientific">Methanothermobacter marburgensis (strain ATCC BAA-927 / DSM 2133 / JCM 14651 / NBRC 100331 / OCM 82 / Marburg)</name>
    <name type="common">Methanobacterium thermoautotrophicum</name>
    <dbReference type="NCBI Taxonomy" id="79929"/>
    <lineage>
        <taxon>Archaea</taxon>
        <taxon>Methanobacteriati</taxon>
        <taxon>Methanobacteriota</taxon>
        <taxon>Methanomada group</taxon>
        <taxon>Methanobacteria</taxon>
        <taxon>Methanobacteriales</taxon>
        <taxon>Methanobacteriaceae</taxon>
        <taxon>Methanothermobacter</taxon>
    </lineage>
</organism>
<sequence>MQVHDNHRRPLVSLRISVTGRCNVSCIYCHRDGILRSDEEMSPEDIENICRVASDLGVKKIRLSGGEPLIRDDIVEIVEKINSIGFRDISITTNGTLLEDLSVPLRDAGLDRVNVSFDTLKPETYRFITRKDYLERVKAGIEGAVMAGLDPVKINMVILRGVNHHEIWDMFEFCRQQGAVLQIIELLKTDSCPDNGVERYHCDITPIEAELAEMADRIMTRKFMQDRKKYFIGDGEVEVVRPMDNTRFCANCTRLRVTPDGKLKPCLLRNDNLVDTKEALSSGDLEGLRELFLEAIRRRSPYYQS</sequence>
<comment type="function">
    <text evidence="1">Catalyzes the cyclization of GTP to (8S)-3',8-cyclo-7,8-dihydroguanosine 5'-triphosphate.</text>
</comment>
<comment type="catalytic activity">
    <reaction evidence="1">
        <text>GTP + AH2 + S-adenosyl-L-methionine = (8S)-3',8-cyclo-7,8-dihydroguanosine 5'-triphosphate + 5'-deoxyadenosine + L-methionine + A + H(+)</text>
        <dbReference type="Rhea" id="RHEA:49576"/>
        <dbReference type="ChEBI" id="CHEBI:13193"/>
        <dbReference type="ChEBI" id="CHEBI:15378"/>
        <dbReference type="ChEBI" id="CHEBI:17319"/>
        <dbReference type="ChEBI" id="CHEBI:17499"/>
        <dbReference type="ChEBI" id="CHEBI:37565"/>
        <dbReference type="ChEBI" id="CHEBI:57844"/>
        <dbReference type="ChEBI" id="CHEBI:59789"/>
        <dbReference type="ChEBI" id="CHEBI:131766"/>
        <dbReference type="EC" id="4.1.99.22"/>
    </reaction>
</comment>
<comment type="cofactor">
    <cofactor evidence="1">
        <name>[4Fe-4S] cluster</name>
        <dbReference type="ChEBI" id="CHEBI:49883"/>
    </cofactor>
    <text evidence="1">Binds 2 [4Fe-4S] clusters. Binds 1 [4Fe-4S] cluster coordinated with 3 cysteines and an exchangeable S-adenosyl-L-methionine and 1 [4Fe-4S] cluster coordinated with 3 cysteines and the GTP-derived substrate.</text>
</comment>
<comment type="pathway">
    <text evidence="1">Cofactor biosynthesis; molybdopterin biosynthesis.</text>
</comment>
<comment type="similarity">
    <text evidence="1">Belongs to the radical SAM superfamily. MoaA family.</text>
</comment>
<protein>
    <recommendedName>
        <fullName evidence="1">Probable GTP 3',8-cyclase</fullName>
        <ecNumber evidence="1">4.1.99.22</ecNumber>
    </recommendedName>
    <alternativeName>
        <fullName evidence="1">Molybdenum cofactor biosynthesis protein A</fullName>
    </alternativeName>
</protein>
<proteinExistence type="inferred from homology"/>
<dbReference type="EC" id="4.1.99.22" evidence="1"/>
<dbReference type="EMBL" id="X87968">
    <property type="protein sequence ID" value="CAA61207.1"/>
    <property type="molecule type" value="Genomic_DNA"/>
</dbReference>
<dbReference type="EMBL" id="CP001710">
    <property type="protein sequence ID" value="ADL57745.1"/>
    <property type="molecule type" value="Genomic_DNA"/>
</dbReference>
<dbReference type="RefSeq" id="WP_013294974.1">
    <property type="nucleotide sequence ID" value="NC_014408.1"/>
</dbReference>
<dbReference type="SMR" id="Q50746"/>
<dbReference type="STRING" id="79929.MTBMA_c01360"/>
<dbReference type="PaxDb" id="79929-MTBMA_c01360"/>
<dbReference type="GeneID" id="77398917"/>
<dbReference type="GeneID" id="9703841"/>
<dbReference type="KEGG" id="mmg:MTBMA_c01360"/>
<dbReference type="PATRIC" id="fig|79929.8.peg.132"/>
<dbReference type="HOGENOM" id="CLU_009273_0_1_2"/>
<dbReference type="OrthoDB" id="6925at2157"/>
<dbReference type="UniPathway" id="UPA00344"/>
<dbReference type="Proteomes" id="UP000000345">
    <property type="component" value="Chromosome"/>
</dbReference>
<dbReference type="GO" id="GO:0051539">
    <property type="term" value="F:4 iron, 4 sulfur cluster binding"/>
    <property type="evidence" value="ECO:0007669"/>
    <property type="project" value="UniProtKB-UniRule"/>
</dbReference>
<dbReference type="GO" id="GO:0061799">
    <property type="term" value="F:cyclic pyranopterin monophosphate synthase activity"/>
    <property type="evidence" value="ECO:0007669"/>
    <property type="project" value="TreeGrafter"/>
</dbReference>
<dbReference type="GO" id="GO:0061798">
    <property type="term" value="F:GTP 3',8'-cyclase activity"/>
    <property type="evidence" value="ECO:0007669"/>
    <property type="project" value="UniProtKB-UniRule"/>
</dbReference>
<dbReference type="GO" id="GO:0005525">
    <property type="term" value="F:GTP binding"/>
    <property type="evidence" value="ECO:0007669"/>
    <property type="project" value="UniProtKB-UniRule"/>
</dbReference>
<dbReference type="GO" id="GO:0046872">
    <property type="term" value="F:metal ion binding"/>
    <property type="evidence" value="ECO:0007669"/>
    <property type="project" value="UniProtKB-KW"/>
</dbReference>
<dbReference type="GO" id="GO:1904047">
    <property type="term" value="F:S-adenosyl-L-methionine binding"/>
    <property type="evidence" value="ECO:0007669"/>
    <property type="project" value="UniProtKB-UniRule"/>
</dbReference>
<dbReference type="GO" id="GO:0006777">
    <property type="term" value="P:Mo-molybdopterin cofactor biosynthetic process"/>
    <property type="evidence" value="ECO:0007669"/>
    <property type="project" value="UniProtKB-UniRule"/>
</dbReference>
<dbReference type="CDD" id="cd01335">
    <property type="entry name" value="Radical_SAM"/>
    <property type="match status" value="1"/>
</dbReference>
<dbReference type="CDD" id="cd21117">
    <property type="entry name" value="Twitch_MoaA"/>
    <property type="match status" value="1"/>
</dbReference>
<dbReference type="Gene3D" id="3.20.20.70">
    <property type="entry name" value="Aldolase class I"/>
    <property type="match status" value="1"/>
</dbReference>
<dbReference type="HAMAP" id="MF_01225_A">
    <property type="entry name" value="MoaA_A"/>
    <property type="match status" value="1"/>
</dbReference>
<dbReference type="InterPro" id="IPR013785">
    <property type="entry name" value="Aldolase_TIM"/>
</dbReference>
<dbReference type="InterPro" id="IPR006638">
    <property type="entry name" value="Elp3/MiaA/NifB-like_rSAM"/>
</dbReference>
<dbReference type="InterPro" id="IPR013485">
    <property type="entry name" value="MoaA_arc"/>
</dbReference>
<dbReference type="InterPro" id="IPR000385">
    <property type="entry name" value="MoaA_NifB_PqqE_Fe-S-bd_CS"/>
</dbReference>
<dbReference type="InterPro" id="IPR010505">
    <property type="entry name" value="MoaA_twitch"/>
</dbReference>
<dbReference type="InterPro" id="IPR050105">
    <property type="entry name" value="MoCo_biosynth_MoaA/MoaC"/>
</dbReference>
<dbReference type="InterPro" id="IPR007197">
    <property type="entry name" value="rSAM"/>
</dbReference>
<dbReference type="NCBIfam" id="TIGR02668">
    <property type="entry name" value="moaA_archaeal"/>
    <property type="match status" value="1"/>
</dbReference>
<dbReference type="NCBIfam" id="NF001199">
    <property type="entry name" value="PRK00164.2-1"/>
    <property type="match status" value="1"/>
</dbReference>
<dbReference type="PANTHER" id="PTHR22960:SF0">
    <property type="entry name" value="MOLYBDENUM COFACTOR BIOSYNTHESIS PROTEIN 1"/>
    <property type="match status" value="1"/>
</dbReference>
<dbReference type="PANTHER" id="PTHR22960">
    <property type="entry name" value="MOLYBDOPTERIN COFACTOR SYNTHESIS PROTEIN A"/>
    <property type="match status" value="1"/>
</dbReference>
<dbReference type="Pfam" id="PF13353">
    <property type="entry name" value="Fer4_12"/>
    <property type="match status" value="1"/>
</dbReference>
<dbReference type="Pfam" id="PF06463">
    <property type="entry name" value="Mob_synth_C"/>
    <property type="match status" value="1"/>
</dbReference>
<dbReference type="Pfam" id="PF04055">
    <property type="entry name" value="Radical_SAM"/>
    <property type="match status" value="1"/>
</dbReference>
<dbReference type="SFLD" id="SFLDG01383">
    <property type="entry name" value="cyclic_pyranopterin_phosphate"/>
    <property type="match status" value="1"/>
</dbReference>
<dbReference type="SFLD" id="SFLDG01067">
    <property type="entry name" value="SPASM/twitch_domain_containing"/>
    <property type="match status" value="1"/>
</dbReference>
<dbReference type="SMART" id="SM00729">
    <property type="entry name" value="Elp3"/>
    <property type="match status" value="1"/>
</dbReference>
<dbReference type="SUPFAM" id="SSF102114">
    <property type="entry name" value="Radical SAM enzymes"/>
    <property type="match status" value="1"/>
</dbReference>
<dbReference type="PROSITE" id="PS01305">
    <property type="entry name" value="MOAA_NIFB_PQQE"/>
    <property type="match status" value="1"/>
</dbReference>
<dbReference type="PROSITE" id="PS51918">
    <property type="entry name" value="RADICAL_SAM"/>
    <property type="match status" value="1"/>
</dbReference>
<gene>
    <name evidence="1" type="primary">moaA</name>
    <name type="ordered locus">MTBMA_c01360</name>
</gene>
<name>MOAA_METTM</name>